<reference key="1">
    <citation type="journal article" date="1990" name="Nature">
        <title>Relationship of a putative receptor protein kinase from maize to the S-locus glycoproteins of Brassica.</title>
        <authorList>
            <person name="Walker J.C."/>
            <person name="Zhang R."/>
        </authorList>
    </citation>
    <scope>NUCLEOTIDE SEQUENCE [MRNA]</scope>
    <source>
        <strain>cv. B73</strain>
        <tissue>Root</tissue>
    </source>
</reference>
<reference key="2">
    <citation type="journal article" date="1993" name="Plant Mol. Biol.">
        <title>Structure and expression of the S locus-related genes of maize.</title>
        <authorList>
            <person name="Zhang R."/>
            <person name="Walker J.C."/>
        </authorList>
    </citation>
    <scope>NUCLEOTIDE SEQUENCE [GENOMIC DNA]</scope>
    <source>
        <strain>cv. B73</strain>
    </source>
</reference>
<proteinExistence type="evidence at transcript level"/>
<evidence type="ECO:0000250" key="1"/>
<evidence type="ECO:0000255" key="2"/>
<evidence type="ECO:0000255" key="3">
    <source>
        <dbReference type="PROSITE-ProRule" id="PRU00038"/>
    </source>
</evidence>
<evidence type="ECO:0000255" key="4">
    <source>
        <dbReference type="PROSITE-ProRule" id="PRU00076"/>
    </source>
</evidence>
<evidence type="ECO:0000255" key="5">
    <source>
        <dbReference type="PROSITE-ProRule" id="PRU00159"/>
    </source>
</evidence>
<evidence type="ECO:0000255" key="6">
    <source>
        <dbReference type="PROSITE-ProRule" id="PRU00315"/>
    </source>
</evidence>
<evidence type="ECO:0000255" key="7">
    <source>
        <dbReference type="PROSITE-ProRule" id="PRU10027"/>
    </source>
</evidence>
<name>KPRO_MAIZE</name>
<feature type="signal peptide">
    <location>
        <begin position="1"/>
        <end position="28"/>
    </location>
</feature>
<feature type="chain" id="PRO_0000024339" description="Putative receptor protein kinase ZmPK1">
    <location>
        <begin position="29"/>
        <end position="817"/>
    </location>
</feature>
<feature type="topological domain" description="Extracellular" evidence="2">
    <location>
        <begin position="29"/>
        <end position="472"/>
    </location>
</feature>
<feature type="transmembrane region" description="Helical" evidence="2">
    <location>
        <begin position="473"/>
        <end position="498"/>
    </location>
</feature>
<feature type="topological domain" description="Cytoplasmic" evidence="2">
    <location>
        <begin position="499"/>
        <end position="817"/>
    </location>
</feature>
<feature type="domain" description="Bulb-type lectin" evidence="3">
    <location>
        <begin position="29"/>
        <end position="158"/>
    </location>
</feature>
<feature type="domain" description="EGF-like" evidence="4">
    <location>
        <begin position="292"/>
        <end position="328"/>
    </location>
</feature>
<feature type="domain" description="PAN" evidence="6">
    <location>
        <begin position="342"/>
        <end position="424"/>
    </location>
</feature>
<feature type="domain" description="Protein kinase" evidence="5">
    <location>
        <begin position="534"/>
        <end position="817"/>
    </location>
</feature>
<feature type="active site" description="Proton acceptor" evidence="5 7">
    <location>
        <position position="658"/>
    </location>
</feature>
<feature type="binding site" evidence="5">
    <location>
        <begin position="540"/>
        <end position="548"/>
    </location>
    <ligand>
        <name>ATP</name>
        <dbReference type="ChEBI" id="CHEBI:30616"/>
    </ligand>
</feature>
<feature type="binding site" evidence="5">
    <location>
        <position position="562"/>
    </location>
    <ligand>
        <name>ATP</name>
        <dbReference type="ChEBI" id="CHEBI:30616"/>
    </ligand>
</feature>
<feature type="glycosylation site" description="N-linked (GlcNAc...) asparagine" evidence="2">
    <location>
        <position position="83"/>
    </location>
</feature>
<feature type="glycosylation site" description="N-linked (GlcNAc...) asparagine" evidence="2">
    <location>
        <position position="128"/>
    </location>
</feature>
<feature type="glycosylation site" description="N-linked (GlcNAc...) asparagine" evidence="2">
    <location>
        <position position="228"/>
    </location>
</feature>
<feature type="glycosylation site" description="N-linked (GlcNAc...) asparagine" evidence="2">
    <location>
        <position position="279"/>
    </location>
</feature>
<feature type="glycosylation site" description="N-linked (GlcNAc...) asparagine" evidence="2">
    <location>
        <position position="329"/>
    </location>
</feature>
<feature type="glycosylation site" description="N-linked (GlcNAc...) asparagine" evidence="2">
    <location>
        <position position="339"/>
    </location>
</feature>
<feature type="glycosylation site" description="N-linked (GlcNAc...) asparagine" evidence="2">
    <location>
        <position position="452"/>
    </location>
</feature>
<feature type="disulfide bond" evidence="1">
    <location>
        <begin position="296"/>
        <end position="308"/>
    </location>
</feature>
<feature type="disulfide bond" evidence="1">
    <location>
        <begin position="302"/>
        <end position="316"/>
    </location>
</feature>
<feature type="disulfide bond" evidence="1">
    <location>
        <begin position="376"/>
        <end position="398"/>
    </location>
</feature>
<feature type="disulfide bond" evidence="1">
    <location>
        <begin position="384"/>
        <end position="386"/>
    </location>
</feature>
<keyword id="KW-0067">ATP-binding</keyword>
<keyword id="KW-1015">Disulfide bond</keyword>
<keyword id="KW-0245">EGF-like domain</keyword>
<keyword id="KW-0325">Glycoprotein</keyword>
<keyword id="KW-0418">Kinase</keyword>
<keyword id="KW-0472">Membrane</keyword>
<keyword id="KW-0547">Nucleotide-binding</keyword>
<keyword id="KW-0675">Receptor</keyword>
<keyword id="KW-1185">Reference proteome</keyword>
<keyword id="KW-0723">Serine/threonine-protein kinase</keyword>
<keyword id="KW-0732">Signal</keyword>
<keyword id="KW-0808">Transferase</keyword>
<keyword id="KW-0812">Transmembrane</keyword>
<keyword id="KW-1133">Transmembrane helix</keyword>
<protein>
    <recommendedName>
        <fullName>Putative receptor protein kinase ZmPK1</fullName>
        <ecNumber>2.7.11.1</ecNumber>
    </recommendedName>
</protein>
<sequence>MPRPLAALLSTACILSFFIALFPRAASSRDILPLGSSLVVESYESSTLQSSDGTFSSGFYEVYTHAFTFSVWYSKTEAAAANNKTIVWSANPDRPVHARRSALTLQKDGNMVLTDYDGAAVWRADGNNFTGVQRARLLDTGNLVIEDSGGNTVWQSFDSPTDTFLPTQLITAATRLVPTTQSRSPGNYIFRFSDLSVLSLIYHVPQVSDIYWPDPDQNLYQDGRNQYNSTRLGMLTDSGVLASSDFADGQALVASDVGPGVKRRLTLDPDGNLRLYSMNDSDGSWSVSMVAMTQPCNIHGLCGPNGICHYSPTPTCSCPPGYATRNPGNWTEGCMAIVNTTCDRYDKRSMRFVRLPNTDFWGSDQQHLLSVSLRTCRDICISDCTCKGFQYQEGTGSCYPKAYLFSGRTYPTSDVRTIYLKLPTGVSVSNALIPRSDVFDSVPRRLDCDRMNKSIREPFPDVHKTGGGESKWFYFYGFIAAFFVVEVSFISFAWFFVLKRELRPSELWASEKGYKAMTSNFRRYSYRELVKATRKFKVELGRGESGTVYKGVLEDDRHVAVKKLENVRQGKEVFQAELSVIGRINHMNLVRIWGFCSEGSHRLLVSEYVENGSLANILFSEGGNILLDWEGRFNIALGVAKGLAYLHHECLEWVIHCDVKPENILLDQAFEPKITDFGLVKLLNRGGSTQNVSHVRGTLGYIAPEWVSSLPITAKVDVYSYGVVLLELLTGTRVSELVGGTDEVHSMLRKLVRMLSAKLEGEEQSWIDGYLDSKLNRPVNYVQARTLIKLAVSCLEEDRSKRPTMEHAVQTLLSADD</sequence>
<accession>P17801</accession>
<organism>
    <name type="scientific">Zea mays</name>
    <name type="common">Maize</name>
    <dbReference type="NCBI Taxonomy" id="4577"/>
    <lineage>
        <taxon>Eukaryota</taxon>
        <taxon>Viridiplantae</taxon>
        <taxon>Streptophyta</taxon>
        <taxon>Embryophyta</taxon>
        <taxon>Tracheophyta</taxon>
        <taxon>Spermatophyta</taxon>
        <taxon>Magnoliopsida</taxon>
        <taxon>Liliopsida</taxon>
        <taxon>Poales</taxon>
        <taxon>Poaceae</taxon>
        <taxon>PACMAD clade</taxon>
        <taxon>Panicoideae</taxon>
        <taxon>Andropogonodae</taxon>
        <taxon>Andropogoneae</taxon>
        <taxon>Tripsacinae</taxon>
        <taxon>Zea</taxon>
    </lineage>
</organism>
<dbReference type="EC" id="2.7.11.1"/>
<dbReference type="EMBL" id="X52384">
    <property type="protein sequence ID" value="CAA36611.1"/>
    <property type="molecule type" value="mRNA"/>
</dbReference>
<dbReference type="EMBL" id="X67733">
    <property type="protein sequence ID" value="CAA47962.1"/>
    <property type="molecule type" value="Genomic_DNA"/>
</dbReference>
<dbReference type="PIR" id="S10930">
    <property type="entry name" value="S10930"/>
</dbReference>
<dbReference type="RefSeq" id="NP_001105424.1">
    <property type="nucleotide sequence ID" value="NM_001111954.1"/>
</dbReference>
<dbReference type="SMR" id="P17801"/>
<dbReference type="STRING" id="4577.P17801"/>
<dbReference type="GlyCosmos" id="P17801">
    <property type="glycosylation" value="7 sites, No reported glycans"/>
</dbReference>
<dbReference type="PaxDb" id="4577-GRMZM2G328785_P01"/>
<dbReference type="EnsemblPlants" id="Zm00001eb284380_T002">
    <property type="protein sequence ID" value="Zm00001eb284380_P002"/>
    <property type="gene ID" value="Zm00001eb284380"/>
</dbReference>
<dbReference type="GeneID" id="542378"/>
<dbReference type="Gramene" id="Zm00001eb284380_T002">
    <property type="protein sequence ID" value="Zm00001eb284380_P002"/>
    <property type="gene ID" value="Zm00001eb284380"/>
</dbReference>
<dbReference type="KEGG" id="zma:542378"/>
<dbReference type="MaizeGDB" id="65910"/>
<dbReference type="eggNOG" id="ENOG502QRH4">
    <property type="taxonomic scope" value="Eukaryota"/>
</dbReference>
<dbReference type="HOGENOM" id="CLU_000288_116_2_1"/>
<dbReference type="InParanoid" id="P17801"/>
<dbReference type="OMA" id="MWQADGN"/>
<dbReference type="OrthoDB" id="619632at2759"/>
<dbReference type="Proteomes" id="UP000007305">
    <property type="component" value="Chromosome 6"/>
</dbReference>
<dbReference type="ExpressionAtlas" id="P17801">
    <property type="expression patterns" value="baseline and differential"/>
</dbReference>
<dbReference type="GO" id="GO:0016020">
    <property type="term" value="C:membrane"/>
    <property type="evidence" value="ECO:0007669"/>
    <property type="project" value="UniProtKB-SubCell"/>
</dbReference>
<dbReference type="GO" id="GO:0005524">
    <property type="term" value="F:ATP binding"/>
    <property type="evidence" value="ECO:0007669"/>
    <property type="project" value="UniProtKB-KW"/>
</dbReference>
<dbReference type="GO" id="GO:0004672">
    <property type="term" value="F:protein kinase activity"/>
    <property type="evidence" value="ECO:0000318"/>
    <property type="project" value="GO_Central"/>
</dbReference>
<dbReference type="GO" id="GO:0106310">
    <property type="term" value="F:protein serine kinase activity"/>
    <property type="evidence" value="ECO:0007669"/>
    <property type="project" value="RHEA"/>
</dbReference>
<dbReference type="GO" id="GO:0004674">
    <property type="term" value="F:protein serine/threonine kinase activity"/>
    <property type="evidence" value="ECO:0007669"/>
    <property type="project" value="UniProtKB-KW"/>
</dbReference>
<dbReference type="GO" id="GO:0048544">
    <property type="term" value="P:recognition of pollen"/>
    <property type="evidence" value="ECO:0007669"/>
    <property type="project" value="InterPro"/>
</dbReference>
<dbReference type="GO" id="GO:0051707">
    <property type="term" value="P:response to other organism"/>
    <property type="evidence" value="ECO:0007669"/>
    <property type="project" value="UniProtKB-ARBA"/>
</dbReference>
<dbReference type="CDD" id="cd00028">
    <property type="entry name" value="B_lectin"/>
    <property type="match status" value="1"/>
</dbReference>
<dbReference type="CDD" id="cd00053">
    <property type="entry name" value="EGF"/>
    <property type="match status" value="1"/>
</dbReference>
<dbReference type="CDD" id="cd01098">
    <property type="entry name" value="PAN_AP_plant"/>
    <property type="match status" value="1"/>
</dbReference>
<dbReference type="CDD" id="cd14066">
    <property type="entry name" value="STKc_IRAK"/>
    <property type="match status" value="1"/>
</dbReference>
<dbReference type="FunFam" id="3.30.200.20:FF:000059">
    <property type="entry name" value="S-receptor-like serine/threonine-protein kinase"/>
    <property type="match status" value="1"/>
</dbReference>
<dbReference type="FunFam" id="1.10.510.10:FF:000302">
    <property type="entry name" value="Serine/threonine-protein kinase"/>
    <property type="match status" value="1"/>
</dbReference>
<dbReference type="FunFam" id="2.90.10.10:FF:000027">
    <property type="entry name" value="Serine/threonine-protein kinase"/>
    <property type="match status" value="1"/>
</dbReference>
<dbReference type="Gene3D" id="2.90.10.10">
    <property type="entry name" value="Bulb-type lectin domain"/>
    <property type="match status" value="1"/>
</dbReference>
<dbReference type="Gene3D" id="3.30.200.20">
    <property type="entry name" value="Phosphorylase Kinase, domain 1"/>
    <property type="match status" value="1"/>
</dbReference>
<dbReference type="Gene3D" id="1.10.510.10">
    <property type="entry name" value="Transferase(Phosphotransferase) domain 1"/>
    <property type="match status" value="1"/>
</dbReference>
<dbReference type="InterPro" id="IPR001480">
    <property type="entry name" value="Bulb-type_lectin_dom"/>
</dbReference>
<dbReference type="InterPro" id="IPR036426">
    <property type="entry name" value="Bulb-type_lectin_dom_sf"/>
</dbReference>
<dbReference type="InterPro" id="IPR000742">
    <property type="entry name" value="EGF-like_dom"/>
</dbReference>
<dbReference type="InterPro" id="IPR011009">
    <property type="entry name" value="Kinase-like_dom_sf"/>
</dbReference>
<dbReference type="InterPro" id="IPR003609">
    <property type="entry name" value="Pan_app"/>
</dbReference>
<dbReference type="InterPro" id="IPR000719">
    <property type="entry name" value="Prot_kinase_dom"/>
</dbReference>
<dbReference type="InterPro" id="IPR017441">
    <property type="entry name" value="Protein_kinase_ATP_BS"/>
</dbReference>
<dbReference type="InterPro" id="IPR000858">
    <property type="entry name" value="S_locus_glycoprot_dom"/>
</dbReference>
<dbReference type="InterPro" id="IPR008271">
    <property type="entry name" value="Ser/Thr_kinase_AS"/>
</dbReference>
<dbReference type="InterPro" id="IPR024171">
    <property type="entry name" value="SRK-like_kinase"/>
</dbReference>
<dbReference type="PANTHER" id="PTHR47974">
    <property type="entry name" value="OS07G0415500 PROTEIN"/>
    <property type="match status" value="1"/>
</dbReference>
<dbReference type="PANTHER" id="PTHR47974:SF4">
    <property type="entry name" value="RECEPTOR-LIKE SERINE_THREONINE-PROTEIN KINASE"/>
    <property type="match status" value="1"/>
</dbReference>
<dbReference type="Pfam" id="PF01453">
    <property type="entry name" value="B_lectin"/>
    <property type="match status" value="1"/>
</dbReference>
<dbReference type="Pfam" id="PF00024">
    <property type="entry name" value="PAN_1"/>
    <property type="match status" value="1"/>
</dbReference>
<dbReference type="Pfam" id="PF00069">
    <property type="entry name" value="Pkinase"/>
    <property type="match status" value="1"/>
</dbReference>
<dbReference type="Pfam" id="PF00954">
    <property type="entry name" value="S_locus_glycop"/>
    <property type="match status" value="1"/>
</dbReference>
<dbReference type="PIRSF" id="PIRSF000641">
    <property type="entry name" value="SRK"/>
    <property type="match status" value="1"/>
</dbReference>
<dbReference type="SMART" id="SM00108">
    <property type="entry name" value="B_lectin"/>
    <property type="match status" value="1"/>
</dbReference>
<dbReference type="SMART" id="SM00473">
    <property type="entry name" value="PAN_AP"/>
    <property type="match status" value="1"/>
</dbReference>
<dbReference type="SMART" id="SM00220">
    <property type="entry name" value="S_TKc"/>
    <property type="match status" value="1"/>
</dbReference>
<dbReference type="SUPFAM" id="SSF51110">
    <property type="entry name" value="alpha-D-mannose-specific plant lectins"/>
    <property type="match status" value="1"/>
</dbReference>
<dbReference type="SUPFAM" id="SSF57414">
    <property type="entry name" value="Hairpin loop containing domain-like"/>
    <property type="match status" value="1"/>
</dbReference>
<dbReference type="SUPFAM" id="SSF56112">
    <property type="entry name" value="Protein kinase-like (PK-like)"/>
    <property type="match status" value="1"/>
</dbReference>
<dbReference type="PROSITE" id="PS50927">
    <property type="entry name" value="BULB_LECTIN"/>
    <property type="match status" value="1"/>
</dbReference>
<dbReference type="PROSITE" id="PS50026">
    <property type="entry name" value="EGF_3"/>
    <property type="match status" value="1"/>
</dbReference>
<dbReference type="PROSITE" id="PS50948">
    <property type="entry name" value="PAN"/>
    <property type="match status" value="1"/>
</dbReference>
<dbReference type="PROSITE" id="PS00107">
    <property type="entry name" value="PROTEIN_KINASE_ATP"/>
    <property type="match status" value="1"/>
</dbReference>
<dbReference type="PROSITE" id="PS50011">
    <property type="entry name" value="PROTEIN_KINASE_DOM"/>
    <property type="match status" value="1"/>
</dbReference>
<dbReference type="PROSITE" id="PS00108">
    <property type="entry name" value="PROTEIN_KINASE_ST"/>
    <property type="match status" value="1"/>
</dbReference>
<comment type="function">
    <text>Probable receptor. Interaction with a ligand in the extracellular domain triggers the protein kinase activity of the cytoplasmic domain.</text>
</comment>
<comment type="catalytic activity">
    <reaction>
        <text>L-seryl-[protein] + ATP = O-phospho-L-seryl-[protein] + ADP + H(+)</text>
        <dbReference type="Rhea" id="RHEA:17989"/>
        <dbReference type="Rhea" id="RHEA-COMP:9863"/>
        <dbReference type="Rhea" id="RHEA-COMP:11604"/>
        <dbReference type="ChEBI" id="CHEBI:15378"/>
        <dbReference type="ChEBI" id="CHEBI:29999"/>
        <dbReference type="ChEBI" id="CHEBI:30616"/>
        <dbReference type="ChEBI" id="CHEBI:83421"/>
        <dbReference type="ChEBI" id="CHEBI:456216"/>
        <dbReference type="EC" id="2.7.11.1"/>
    </reaction>
</comment>
<comment type="catalytic activity">
    <reaction>
        <text>L-threonyl-[protein] + ATP = O-phospho-L-threonyl-[protein] + ADP + H(+)</text>
        <dbReference type="Rhea" id="RHEA:46608"/>
        <dbReference type="Rhea" id="RHEA-COMP:11060"/>
        <dbReference type="Rhea" id="RHEA-COMP:11605"/>
        <dbReference type="ChEBI" id="CHEBI:15378"/>
        <dbReference type="ChEBI" id="CHEBI:30013"/>
        <dbReference type="ChEBI" id="CHEBI:30616"/>
        <dbReference type="ChEBI" id="CHEBI:61977"/>
        <dbReference type="ChEBI" id="CHEBI:456216"/>
        <dbReference type="EC" id="2.7.11.1"/>
    </reaction>
</comment>
<comment type="subcellular location">
    <subcellularLocation>
        <location>Membrane</location>
        <topology>Single-pass type I membrane protein</topology>
    </subcellularLocation>
</comment>
<comment type="tissue specificity">
    <text>Expressed predominantly in the shoots and roots of young maize seedlings, and to a lesser extent in the silks.</text>
</comment>
<comment type="similarity">
    <text evidence="5">Belongs to the protein kinase superfamily. Ser/Thr protein kinase family.</text>
</comment>
<gene>
    <name type="primary">PK1</name>
</gene>